<sequence>MPTRSTNPNKQPVELNRTSLFLGLLLVFVLGILSPATSLTS</sequence>
<feature type="chain" id="PRO_0000306210" description="Photosystem II reaction center protein L">
    <location>
        <begin position="1"/>
        <end position="41"/>
    </location>
</feature>
<feature type="transmembrane region" description="Helical" evidence="1">
    <location>
        <begin position="20"/>
        <end position="40"/>
    </location>
</feature>
<reference key="1">
    <citation type="journal article" date="2007" name="Photosyn. Res.">
        <title>Complete nucleotide sequence of the freshwater unicellular cyanobacterium Synechococcus elongatus PCC 6301 chromosome: gene content and organization.</title>
        <authorList>
            <person name="Sugita C."/>
            <person name="Ogata K."/>
            <person name="Shikata M."/>
            <person name="Jikuya H."/>
            <person name="Takano J."/>
            <person name="Furumichi M."/>
            <person name="Kanehisa M."/>
            <person name="Omata T."/>
            <person name="Sugiura M."/>
            <person name="Sugita M."/>
        </authorList>
    </citation>
    <scope>NUCLEOTIDE SEQUENCE [LARGE SCALE GENOMIC DNA]</scope>
    <source>
        <strain>ATCC 27144 / PCC 6301 / SAUG 1402/1</strain>
    </source>
</reference>
<organism>
    <name type="scientific">Synechococcus sp. (strain ATCC 27144 / PCC 6301 / SAUG 1402/1)</name>
    <name type="common">Anacystis nidulans</name>
    <dbReference type="NCBI Taxonomy" id="269084"/>
    <lineage>
        <taxon>Bacteria</taxon>
        <taxon>Bacillati</taxon>
        <taxon>Cyanobacteriota</taxon>
        <taxon>Cyanophyceae</taxon>
        <taxon>Synechococcales</taxon>
        <taxon>Synechococcaceae</taxon>
        <taxon>Synechococcus</taxon>
    </lineage>
</organism>
<accession>Q5N554</accession>
<gene>
    <name evidence="1" type="primary">psbL</name>
    <name type="ordered locus">syc0375_d</name>
</gene>
<name>PSBL_SYNP6</name>
<protein>
    <recommendedName>
        <fullName evidence="1">Photosystem II reaction center protein L</fullName>
        <shortName evidence="1">PSII-L</shortName>
    </recommendedName>
</protein>
<comment type="function">
    <text evidence="1">One of the components of the core complex of photosystem II (PSII). PSII is a light-driven water:plastoquinone oxidoreductase that uses light energy to abstract electrons from H(2)O, generating O(2) and a proton gradient subsequently used for ATP formation. It consists of a core antenna complex that captures photons, and an electron transfer chain that converts photonic excitation into a charge separation. This subunit is found at the monomer-monomer interface and is required for correct PSII assembly and/or dimerization.</text>
</comment>
<comment type="subunit">
    <text evidence="1">PSII is composed of 1 copy each of membrane proteins PsbA, PsbB, PsbC, PsbD, PsbE, PsbF, PsbH, PsbI, PsbJ, PsbK, PsbL, PsbM, PsbT, PsbX, PsbY, PsbZ, Psb30/Ycf12, peripheral proteins PsbO, CyanoQ (PsbQ), PsbU, PsbV and a large number of cofactors. It forms dimeric complexes.</text>
</comment>
<comment type="subcellular location">
    <subcellularLocation>
        <location evidence="1">Cellular thylakoid membrane</location>
        <topology evidence="1">Single-pass membrane protein</topology>
    </subcellularLocation>
</comment>
<comment type="similarity">
    <text evidence="1">Belongs to the PsbL family.</text>
</comment>
<proteinExistence type="inferred from homology"/>
<keyword id="KW-0472">Membrane</keyword>
<keyword id="KW-0602">Photosynthesis</keyword>
<keyword id="KW-0604">Photosystem II</keyword>
<keyword id="KW-0674">Reaction center</keyword>
<keyword id="KW-0793">Thylakoid</keyword>
<keyword id="KW-0812">Transmembrane</keyword>
<keyword id="KW-1133">Transmembrane helix</keyword>
<evidence type="ECO:0000255" key="1">
    <source>
        <dbReference type="HAMAP-Rule" id="MF_01317"/>
    </source>
</evidence>
<dbReference type="EMBL" id="AP008231">
    <property type="protein sequence ID" value="BAD78565.1"/>
    <property type="molecule type" value="Genomic_DNA"/>
</dbReference>
<dbReference type="SMR" id="Q5N554"/>
<dbReference type="KEGG" id="syc:syc0375_d"/>
<dbReference type="Proteomes" id="UP000001175">
    <property type="component" value="Chromosome"/>
</dbReference>
<dbReference type="GO" id="GO:0009539">
    <property type="term" value="C:photosystem II reaction center"/>
    <property type="evidence" value="ECO:0007669"/>
    <property type="project" value="InterPro"/>
</dbReference>
<dbReference type="GO" id="GO:0031676">
    <property type="term" value="C:plasma membrane-derived thylakoid membrane"/>
    <property type="evidence" value="ECO:0007669"/>
    <property type="project" value="UniProtKB-SubCell"/>
</dbReference>
<dbReference type="GO" id="GO:0015979">
    <property type="term" value="P:photosynthesis"/>
    <property type="evidence" value="ECO:0007669"/>
    <property type="project" value="UniProtKB-UniRule"/>
</dbReference>
<dbReference type="HAMAP" id="MF_01317">
    <property type="entry name" value="PSII_PsbL"/>
    <property type="match status" value="1"/>
</dbReference>
<dbReference type="InterPro" id="IPR003372">
    <property type="entry name" value="PSII_PsbL"/>
</dbReference>
<dbReference type="InterPro" id="IPR037266">
    <property type="entry name" value="PSII_PsbL_sf"/>
</dbReference>
<dbReference type="Pfam" id="PF02419">
    <property type="entry name" value="PsbL"/>
    <property type="match status" value="1"/>
</dbReference>
<dbReference type="SUPFAM" id="SSF161017">
    <property type="entry name" value="Photosystem II reaction center protein L, PsbL"/>
    <property type="match status" value="1"/>
</dbReference>